<accession>O18216</accession>
<sequence>MATSSSAFDDELPMEEGMPELLDDEDVPSTLPSLLEQNLDTAPKGDEFKLVKRKRKSGNAIDVVMEDVSQVDEDATADTADDSTGPKSSKRTKGVKGESRVVPVPKHRYTPLKDNWVNIFTPIVKNLGLQVRFNLKKRQVEIRNPVDREDTTDLQKATDFVRAFILGFEVNDAIALIRLDHLFLETFEVADVKHSLKGDHVSRAIGRIAGKDGRTKLVIENTTKTRIVVANTKIHILGAYQNLKLARNAVCSLILGSNPSKVYGSLRNMASRGAERL</sequence>
<protein>
    <recommendedName>
        <fullName>RNA-binding protein pno-1</fullName>
    </recommendedName>
</protein>
<organism>
    <name type="scientific">Caenorhabditis elegans</name>
    <dbReference type="NCBI Taxonomy" id="6239"/>
    <lineage>
        <taxon>Eukaryota</taxon>
        <taxon>Metazoa</taxon>
        <taxon>Ecdysozoa</taxon>
        <taxon>Nematoda</taxon>
        <taxon>Chromadorea</taxon>
        <taxon>Rhabditida</taxon>
        <taxon>Rhabditina</taxon>
        <taxon>Rhabditomorpha</taxon>
        <taxon>Rhabditoidea</taxon>
        <taxon>Rhabditidae</taxon>
        <taxon>Peloderinae</taxon>
        <taxon>Caenorhabditis</taxon>
    </lineage>
</organism>
<reference key="1">
    <citation type="journal article" date="1998" name="Science">
        <title>Genome sequence of the nematode C. elegans: a platform for investigating biology.</title>
        <authorList>
            <consortium name="The C. elegans sequencing consortium"/>
        </authorList>
    </citation>
    <scope>NUCLEOTIDE SEQUENCE [LARGE SCALE GENOMIC DNA]</scope>
    <source>
        <strain>Bristol N2</strain>
    </source>
</reference>
<gene>
    <name evidence="4" type="primary">pno-1</name>
    <name evidence="4" type="ORF">Y53C12B.2</name>
</gene>
<evidence type="ECO:0000250" key="1">
    <source>
        <dbReference type="UniProtKB" id="Q9NRX1"/>
    </source>
</evidence>
<evidence type="ECO:0000256" key="2">
    <source>
        <dbReference type="SAM" id="MobiDB-lite"/>
    </source>
</evidence>
<evidence type="ECO:0000305" key="3"/>
<evidence type="ECO:0000312" key="4">
    <source>
        <dbReference type="WormBase" id="Y53C12B.2"/>
    </source>
</evidence>
<feature type="chain" id="PRO_0000270549" description="RNA-binding protein pno-1">
    <location>
        <begin position="1"/>
        <end position="277"/>
    </location>
</feature>
<feature type="domain" description="KH">
    <location>
        <begin position="198"/>
        <end position="250"/>
    </location>
</feature>
<feature type="region of interest" description="Disordered" evidence="2">
    <location>
        <begin position="1"/>
        <end position="52"/>
    </location>
</feature>
<feature type="region of interest" description="Disordered" evidence="2">
    <location>
        <begin position="72"/>
        <end position="100"/>
    </location>
</feature>
<feature type="compositionally biased region" description="Acidic residues" evidence="2">
    <location>
        <begin position="8"/>
        <end position="27"/>
    </location>
</feature>
<feature type="compositionally biased region" description="Polar residues" evidence="2">
    <location>
        <begin position="30"/>
        <end position="40"/>
    </location>
</feature>
<feature type="compositionally biased region" description="Acidic residues" evidence="2">
    <location>
        <begin position="72"/>
        <end position="81"/>
    </location>
</feature>
<keyword id="KW-0539">Nucleus</keyword>
<keyword id="KW-1185">Reference proteome</keyword>
<keyword id="KW-0694">RNA-binding</keyword>
<comment type="function">
    <text evidence="1">Part of the small subunit (SSU) processome, first precursor of the small eukaryotic ribosomal subunit. During the assembly of the SSU processome in the nucleolus, many ribosome biogenesis factors, an RNA chaperone and ribosomal proteins associate with the nascent pre-rRNA and work in concert to generate RNA folding, modifications, rearrangements and cleavage as well as targeted degradation of pre-ribosomal RNA by the RNA exosome. Positively regulates dimethylation of two adjacent adenosines in the loop of a conserved hairpin near the 3'-end of 18S rRNA.</text>
</comment>
<comment type="subunit">
    <text evidence="1">Part of the small subunit (SSU) processome, composed of more than 70 proteins and the RNA chaperone small nucleolar RNA (snoRNA) U3.</text>
</comment>
<comment type="subcellular location">
    <subcellularLocation>
        <location evidence="1">Nucleus</location>
        <location evidence="1">Nucleolus</location>
    </subcellularLocation>
</comment>
<comment type="similarity">
    <text evidence="3">Belongs to the PNO1 family.</text>
</comment>
<proteinExistence type="inferred from homology"/>
<name>PNO1_CAEEL</name>
<dbReference type="EMBL" id="Z99278">
    <property type="protein sequence ID" value="CAB16491.1"/>
    <property type="molecule type" value="Genomic_DNA"/>
</dbReference>
<dbReference type="PIR" id="T27134">
    <property type="entry name" value="T27134"/>
</dbReference>
<dbReference type="RefSeq" id="NP_496099.1">
    <property type="nucleotide sequence ID" value="NM_063698.5"/>
</dbReference>
<dbReference type="SMR" id="O18216"/>
<dbReference type="BioGRID" id="39856">
    <property type="interactions" value="3"/>
</dbReference>
<dbReference type="FunCoup" id="O18216">
    <property type="interactions" value="2166"/>
</dbReference>
<dbReference type="STRING" id="6239.Y53C12B.2.2"/>
<dbReference type="PaxDb" id="6239-Y53C12B.2"/>
<dbReference type="PeptideAtlas" id="O18216"/>
<dbReference type="EnsemblMetazoa" id="Y53C12B.2.1">
    <property type="protein sequence ID" value="Y53C12B.2.1"/>
    <property type="gene ID" value="WBGene00013144"/>
</dbReference>
<dbReference type="GeneID" id="174534"/>
<dbReference type="KEGG" id="cel:CELE_Y53C12B.2"/>
<dbReference type="UCSC" id="Y53C12B.2">
    <property type="organism name" value="c. elegans"/>
</dbReference>
<dbReference type="AGR" id="WB:WBGene00013144"/>
<dbReference type="CTD" id="174534"/>
<dbReference type="WormBase" id="Y53C12B.2">
    <property type="protein sequence ID" value="CE14896"/>
    <property type="gene ID" value="WBGene00013144"/>
    <property type="gene designation" value="pno-1"/>
</dbReference>
<dbReference type="eggNOG" id="KOG3273">
    <property type="taxonomic scope" value="Eukaryota"/>
</dbReference>
<dbReference type="GeneTree" id="ENSGT00390000018052"/>
<dbReference type="HOGENOM" id="CLU_064992_2_1_1"/>
<dbReference type="InParanoid" id="O18216"/>
<dbReference type="OMA" id="TPLRNNW"/>
<dbReference type="OrthoDB" id="1932641at2759"/>
<dbReference type="PhylomeDB" id="O18216"/>
<dbReference type="PRO" id="PR:O18216"/>
<dbReference type="Proteomes" id="UP000001940">
    <property type="component" value="Chromosome II"/>
</dbReference>
<dbReference type="Bgee" id="WBGene00013144">
    <property type="expression patterns" value="Expressed in germ line (C elegans) and 4 other cell types or tissues"/>
</dbReference>
<dbReference type="GO" id="GO:0005730">
    <property type="term" value="C:nucleolus"/>
    <property type="evidence" value="ECO:0000250"/>
    <property type="project" value="UniProtKB"/>
</dbReference>
<dbReference type="GO" id="GO:0005634">
    <property type="term" value="C:nucleus"/>
    <property type="evidence" value="ECO:0000318"/>
    <property type="project" value="GO_Central"/>
</dbReference>
<dbReference type="GO" id="GO:0032040">
    <property type="term" value="C:small-subunit processome"/>
    <property type="evidence" value="ECO:0000250"/>
    <property type="project" value="UniProtKB"/>
</dbReference>
<dbReference type="GO" id="GO:0003723">
    <property type="term" value="F:RNA binding"/>
    <property type="evidence" value="ECO:0007669"/>
    <property type="project" value="UniProtKB-KW"/>
</dbReference>
<dbReference type="GO" id="GO:0042274">
    <property type="term" value="P:ribosomal small subunit biogenesis"/>
    <property type="evidence" value="ECO:0000250"/>
    <property type="project" value="UniProtKB"/>
</dbReference>
<dbReference type="CDD" id="cd22391">
    <property type="entry name" value="KH-I_PNO1_rpt1"/>
    <property type="match status" value="1"/>
</dbReference>
<dbReference type="CDD" id="cd22392">
    <property type="entry name" value="KH-I_PNO1_rpt2"/>
    <property type="match status" value="1"/>
</dbReference>
<dbReference type="FunFam" id="3.30.1370.10:FF:000009">
    <property type="entry name" value="RNA-binding protein PNO1"/>
    <property type="match status" value="1"/>
</dbReference>
<dbReference type="FunFam" id="3.30.1370.10:FF:000048">
    <property type="entry name" value="RNA-binding protein PNO1 isoform X2"/>
    <property type="match status" value="1"/>
</dbReference>
<dbReference type="Gene3D" id="3.30.1370.10">
    <property type="entry name" value="K Homology domain, type 1"/>
    <property type="match status" value="1"/>
</dbReference>
<dbReference type="InterPro" id="IPR055212">
    <property type="entry name" value="KH-I_PNO1_first"/>
</dbReference>
<dbReference type="InterPro" id="IPR004087">
    <property type="entry name" value="KH_dom"/>
</dbReference>
<dbReference type="InterPro" id="IPR036612">
    <property type="entry name" value="KH_dom_type_1_sf"/>
</dbReference>
<dbReference type="InterPro" id="IPR055211">
    <property type="entry name" value="KH_PNO1_2nd"/>
</dbReference>
<dbReference type="PANTHER" id="PTHR12826">
    <property type="entry name" value="RIBONUCLEASE Y"/>
    <property type="match status" value="1"/>
</dbReference>
<dbReference type="PANTHER" id="PTHR12826:SF13">
    <property type="entry name" value="RNA-BINDING PROTEIN PNO1"/>
    <property type="match status" value="1"/>
</dbReference>
<dbReference type="Pfam" id="PF22891">
    <property type="entry name" value="KH_PNO1_2nd"/>
    <property type="match status" value="1"/>
</dbReference>
<dbReference type="SMART" id="SM00322">
    <property type="entry name" value="KH"/>
    <property type="match status" value="1"/>
</dbReference>
<dbReference type="SUPFAM" id="SSF54791">
    <property type="entry name" value="Eukaryotic type KH-domain (KH-domain type I)"/>
    <property type="match status" value="1"/>
</dbReference>